<keyword id="KW-0002">3D-structure</keyword>
<keyword id="KW-0044">Antibiotic</keyword>
<keyword id="KW-0929">Antimicrobial</keyword>
<keyword id="KW-1015">Disulfide bond</keyword>
<keyword id="KW-0391">Immunity</keyword>
<keyword id="KW-0399">Innate immunity</keyword>
<keyword id="KW-0472">Membrane</keyword>
<keyword id="KW-1185">Reference proteome</keyword>
<keyword id="KW-0964">Secreted</keyword>
<keyword id="KW-0732">Signal</keyword>
<keyword id="KW-0812">Transmembrane</keyword>
<keyword id="KW-1133">Transmembrane helix</keyword>
<dbReference type="EMBL" id="DQ092353">
    <property type="protein sequence ID" value="AAZ42401.1"/>
    <property type="molecule type" value="mRNA"/>
</dbReference>
<dbReference type="EMBL" id="DQ092350">
    <property type="protein sequence ID" value="AAZ65843.1"/>
    <property type="molecule type" value="Genomic_DNA"/>
</dbReference>
<dbReference type="EMBL" id="AB308318">
    <property type="protein sequence ID" value="BAF75955.1"/>
    <property type="molecule type" value="Genomic_DNA"/>
</dbReference>
<dbReference type="RefSeq" id="NP_001298106.1">
    <property type="nucleotide sequence ID" value="NM_001311177.1"/>
</dbReference>
<dbReference type="PDB" id="2HFR">
    <property type="method" value="NMR"/>
    <property type="chains" value="A=125-151"/>
</dbReference>
<dbReference type="PDBsum" id="2HFR"/>
<dbReference type="BMRB" id="Q2IAL6"/>
<dbReference type="SMR" id="Q2IAL6"/>
<dbReference type="FunCoup" id="Q2IAL6">
    <property type="interactions" value="71"/>
</dbReference>
<dbReference type="STRING" id="9031.ENSGALP00000056590"/>
<dbReference type="PaxDb" id="9031-ENSGALP00000030659"/>
<dbReference type="Ensembl" id="ENSGALT00010063222.1">
    <property type="protein sequence ID" value="ENSGALP00010039025.1"/>
    <property type="gene ID" value="ENSGALG00010025935.1"/>
</dbReference>
<dbReference type="GeneID" id="100858343"/>
<dbReference type="KEGG" id="gga:100858343"/>
<dbReference type="CTD" id="100858343"/>
<dbReference type="VEuPathDB" id="HostDB:geneid_100858343"/>
<dbReference type="eggNOG" id="ENOG502SAES">
    <property type="taxonomic scope" value="Eukaryota"/>
</dbReference>
<dbReference type="GeneTree" id="ENSGT00950000185398"/>
<dbReference type="InParanoid" id="Q2IAL6"/>
<dbReference type="OMA" id="KETVCPM"/>
<dbReference type="OrthoDB" id="9930485at2759"/>
<dbReference type="PhylomeDB" id="Q2IAL6"/>
<dbReference type="Reactome" id="R-GGA-6798695">
    <property type="pathway name" value="Neutrophil degranulation"/>
</dbReference>
<dbReference type="Reactome" id="R-GGA-6803157">
    <property type="pathway name" value="Antimicrobial peptides"/>
</dbReference>
<dbReference type="EvolutionaryTrace" id="Q2IAL6"/>
<dbReference type="PRO" id="PR:Q2IAL6"/>
<dbReference type="Proteomes" id="UP000000539">
    <property type="component" value="Chromosome 2"/>
</dbReference>
<dbReference type="Bgee" id="ENSGALG00000034150">
    <property type="expression patterns" value="Expressed in granulocyte and 7 other cell types or tissues"/>
</dbReference>
<dbReference type="GO" id="GO:0005615">
    <property type="term" value="C:extracellular space"/>
    <property type="evidence" value="ECO:0000318"/>
    <property type="project" value="GO_Central"/>
</dbReference>
<dbReference type="GO" id="GO:0016020">
    <property type="term" value="C:membrane"/>
    <property type="evidence" value="ECO:0007669"/>
    <property type="project" value="UniProtKB-SubCell"/>
</dbReference>
<dbReference type="GO" id="GO:0001530">
    <property type="term" value="F:lipopolysaccharide binding"/>
    <property type="evidence" value="ECO:0000318"/>
    <property type="project" value="GO_Central"/>
</dbReference>
<dbReference type="GO" id="GO:0140912">
    <property type="term" value="F:membrane destabilizing activity"/>
    <property type="evidence" value="ECO:0000314"/>
    <property type="project" value="GO_Central"/>
</dbReference>
<dbReference type="GO" id="GO:0061844">
    <property type="term" value="P:antimicrobial humoral immune response mediated by antimicrobial peptide"/>
    <property type="evidence" value="ECO:0000315"/>
    <property type="project" value="GO_Central"/>
</dbReference>
<dbReference type="GO" id="GO:0050829">
    <property type="term" value="P:defense response to Gram-negative bacterium"/>
    <property type="evidence" value="ECO:0000318"/>
    <property type="project" value="GO_Central"/>
</dbReference>
<dbReference type="GO" id="GO:0050830">
    <property type="term" value="P:defense response to Gram-positive bacterium"/>
    <property type="evidence" value="ECO:0000318"/>
    <property type="project" value="GO_Central"/>
</dbReference>
<dbReference type="GO" id="GO:0045087">
    <property type="term" value="P:innate immune response"/>
    <property type="evidence" value="ECO:0000318"/>
    <property type="project" value="GO_Central"/>
</dbReference>
<dbReference type="FunFam" id="3.10.450.10:FF:000003">
    <property type="entry name" value="Cathelicidin antimicrobial peptide"/>
    <property type="match status" value="1"/>
</dbReference>
<dbReference type="Gene3D" id="3.10.450.10">
    <property type="match status" value="1"/>
</dbReference>
<dbReference type="InterPro" id="IPR001894">
    <property type="entry name" value="Cathelicidin-like"/>
</dbReference>
<dbReference type="InterPro" id="IPR046350">
    <property type="entry name" value="Cystatin_sf"/>
</dbReference>
<dbReference type="PANTHER" id="PTHR10206">
    <property type="entry name" value="CATHELICIDIN"/>
    <property type="match status" value="1"/>
</dbReference>
<dbReference type="PANTHER" id="PTHR10206:SF0">
    <property type="entry name" value="CATHELICIDIN B1-RELATED"/>
    <property type="match status" value="1"/>
</dbReference>
<dbReference type="Pfam" id="PF00666">
    <property type="entry name" value="Cathelicidins"/>
    <property type="match status" value="1"/>
</dbReference>
<dbReference type="SUPFAM" id="SSF54403">
    <property type="entry name" value="Cystatin/monellin"/>
    <property type="match status" value="1"/>
</dbReference>
<protein>
    <recommendedName>
        <fullName>Cathelicidin-3</fullName>
        <shortName>CATH-3</shortName>
    </recommendedName>
    <alternativeName>
        <fullName>Fowlicidin-3</fullName>
    </alternativeName>
</protein>
<comment type="function">
    <text evidence="1">May bind bacterial lipopolysaccharide (LPS). May have antimicrobial activity and play a role in the innate immune response (By similarity).</text>
</comment>
<comment type="subcellular location">
    <subcellularLocation>
        <location evidence="1">Secreted</location>
    </subcellularLocation>
    <subcellularLocation>
        <location evidence="4">Membrane</location>
        <topology evidence="4">Single-pass membrane protein</topology>
    </subcellularLocation>
</comment>
<comment type="tissue specificity">
    <text evidence="3">Detected in bone marrow, liver and lung.</text>
</comment>
<comment type="similarity">
    <text evidence="4">Belongs to the cathelicidin family.</text>
</comment>
<sequence>MLSCWVLLLALLGGACALPAPLGYSQALAQAVDSYNQRPEVQNAFRLLSADPEPGPNVQLSSLHNLNFTIMETRCQARSGAQLDSCEFKEDGLVKDCAAPVVLQGGRAVLDVTCVDSMADPVRVKRFWPLVPVAINTVAAGINLYKAIRRK</sequence>
<gene>
    <name type="primary">CATHL3</name>
</gene>
<organism>
    <name type="scientific">Gallus gallus</name>
    <name type="common">Chicken</name>
    <dbReference type="NCBI Taxonomy" id="9031"/>
    <lineage>
        <taxon>Eukaryota</taxon>
        <taxon>Metazoa</taxon>
        <taxon>Chordata</taxon>
        <taxon>Craniata</taxon>
        <taxon>Vertebrata</taxon>
        <taxon>Euteleostomi</taxon>
        <taxon>Archelosauria</taxon>
        <taxon>Archosauria</taxon>
        <taxon>Dinosauria</taxon>
        <taxon>Saurischia</taxon>
        <taxon>Theropoda</taxon>
        <taxon>Coelurosauria</taxon>
        <taxon>Aves</taxon>
        <taxon>Neognathae</taxon>
        <taxon>Galloanserae</taxon>
        <taxon>Galliformes</taxon>
        <taxon>Phasianidae</taxon>
        <taxon>Phasianinae</taxon>
        <taxon>Gallus</taxon>
    </lineage>
</organism>
<accession>Q2IAL6</accession>
<evidence type="ECO:0000250" key="1"/>
<evidence type="ECO:0000255" key="2"/>
<evidence type="ECO:0000269" key="3">
    <source>
    </source>
</evidence>
<evidence type="ECO:0000305" key="4"/>
<evidence type="ECO:0007829" key="5">
    <source>
        <dbReference type="PDB" id="2HFR"/>
    </source>
</evidence>
<feature type="signal peptide" evidence="2">
    <location>
        <begin position="1"/>
        <end position="17"/>
    </location>
</feature>
<feature type="propeptide" id="PRO_0000333224" evidence="2">
    <location>
        <begin position="18"/>
        <end position="122"/>
    </location>
</feature>
<feature type="peptide" id="PRO_0000333225" description="Cathelicidin-3">
    <location>
        <begin position="123"/>
        <end position="151"/>
    </location>
</feature>
<feature type="transmembrane region" description="Helical" evidence="2">
    <location>
        <begin position="128"/>
        <end position="148"/>
    </location>
</feature>
<feature type="disulfide bond" evidence="1">
    <location>
        <begin position="75"/>
        <end position="86"/>
    </location>
</feature>
<feature type="disulfide bond" evidence="1">
    <location>
        <begin position="97"/>
        <end position="114"/>
    </location>
</feature>
<feature type="strand" evidence="5">
    <location>
        <begin position="129"/>
        <end position="133"/>
    </location>
</feature>
<feature type="helix" evidence="5">
    <location>
        <begin position="134"/>
        <end position="142"/>
    </location>
</feature>
<feature type="turn" evidence="5">
    <location>
        <begin position="145"/>
        <end position="149"/>
    </location>
</feature>
<reference key="1">
    <citation type="journal article" date="2006" name="J. Biol. Chem.">
        <title>Identification and functional characterization of three chicken cathelicidins with potent antimicrobial activity.</title>
        <authorList>
            <person name="Xiao Y."/>
            <person name="Cai Y."/>
            <person name="Bommineni Y.R."/>
            <person name="Fernando S.C."/>
            <person name="Prakash O."/>
            <person name="Gilliland S.E."/>
            <person name="Zhang G."/>
        </authorList>
    </citation>
    <scope>NUCLEOTIDE SEQUENCE [GENOMIC DNA / MRNA]</scope>
</reference>
<reference key="2">
    <citation type="journal article" date="2007" name="Proc. Natl. Acad. Sci. U.S.A.">
        <title>Chicken cathelicidin-B1, an antimicrobial guardian at the mucosal M cell gateway.</title>
        <authorList>
            <person name="Goitsuka R."/>
            <person name="Chen C.-I.H."/>
            <person name="Benyon L."/>
            <person name="Asano Y."/>
            <person name="Kitamura D."/>
            <person name="Cooper M.D."/>
        </authorList>
    </citation>
    <scope>NUCLEOTIDE SEQUENCE [GENOMIC DNA]</scope>
    <scope>TISSUE SPECIFICITY</scope>
    <source>
        <tissue>Bursa of Fabricius</tissue>
    </source>
</reference>
<proteinExistence type="evidence at protein level"/>
<name>CTHL3_CHICK</name>